<gene>
    <name type="ORF">OsI_26546</name>
</gene>
<keyword id="KW-0150">Chloroplast</keyword>
<keyword id="KW-0175">Coiled coil</keyword>
<keyword id="KW-0903">Direct protein sequencing</keyword>
<keyword id="KW-0934">Plastid</keyword>
<keyword id="KW-0648">Protein biosynthesis</keyword>
<keyword id="KW-1185">Reference proteome</keyword>
<keyword id="KW-0809">Transit peptide</keyword>
<dbReference type="EMBL" id="CM000132">
    <property type="protein sequence ID" value="EEC82298.1"/>
    <property type="molecule type" value="Genomic_DNA"/>
</dbReference>
<dbReference type="SMR" id="A2YMU2"/>
<dbReference type="STRING" id="39946.A2YMU2"/>
<dbReference type="EnsemblPlants" id="BGIOSGA025975-TA">
    <property type="protein sequence ID" value="BGIOSGA025975-PA"/>
    <property type="gene ID" value="BGIOSGA025975"/>
</dbReference>
<dbReference type="Gramene" id="BGIOSGA025975-TA">
    <property type="protein sequence ID" value="BGIOSGA025975-PA"/>
    <property type="gene ID" value="BGIOSGA025975"/>
</dbReference>
<dbReference type="HOGENOM" id="CLU_073981_3_0_1"/>
<dbReference type="OMA" id="FNPMNNG"/>
<dbReference type="Proteomes" id="UP000007015">
    <property type="component" value="Chromosome 7"/>
</dbReference>
<dbReference type="GO" id="GO:0009507">
    <property type="term" value="C:chloroplast"/>
    <property type="evidence" value="ECO:0007669"/>
    <property type="project" value="UniProtKB-SubCell"/>
</dbReference>
<dbReference type="GO" id="GO:0043023">
    <property type="term" value="F:ribosomal large subunit binding"/>
    <property type="evidence" value="ECO:0007669"/>
    <property type="project" value="TreeGrafter"/>
</dbReference>
<dbReference type="GO" id="GO:0032544">
    <property type="term" value="P:plastid translation"/>
    <property type="evidence" value="ECO:0007669"/>
    <property type="project" value="TreeGrafter"/>
</dbReference>
<dbReference type="CDD" id="cd00520">
    <property type="entry name" value="RRF"/>
    <property type="match status" value="1"/>
</dbReference>
<dbReference type="FunFam" id="3.30.1360.40:FF:000001">
    <property type="entry name" value="Ribosome-recycling factor"/>
    <property type="match status" value="1"/>
</dbReference>
<dbReference type="FunFam" id="1.10.132.20:FF:000017">
    <property type="entry name" value="Ribosome-recycling factor chloroplastic"/>
    <property type="match status" value="1"/>
</dbReference>
<dbReference type="Gene3D" id="3.30.1360.40">
    <property type="match status" value="1"/>
</dbReference>
<dbReference type="Gene3D" id="1.10.132.20">
    <property type="entry name" value="Ribosome-recycling factor"/>
    <property type="match status" value="1"/>
</dbReference>
<dbReference type="HAMAP" id="MF_00040">
    <property type="entry name" value="RRF"/>
    <property type="match status" value="1"/>
</dbReference>
<dbReference type="InterPro" id="IPR002661">
    <property type="entry name" value="Ribosome_recyc_fac"/>
</dbReference>
<dbReference type="InterPro" id="IPR023584">
    <property type="entry name" value="Ribosome_recyc_fac_dom"/>
</dbReference>
<dbReference type="InterPro" id="IPR036191">
    <property type="entry name" value="RRF_sf"/>
</dbReference>
<dbReference type="NCBIfam" id="TIGR00496">
    <property type="entry name" value="frr"/>
    <property type="match status" value="1"/>
</dbReference>
<dbReference type="PANTHER" id="PTHR20982:SF3">
    <property type="entry name" value="MITOCHONDRIAL RIBOSOME RECYCLING FACTOR PSEUDO 1"/>
    <property type="match status" value="1"/>
</dbReference>
<dbReference type="PANTHER" id="PTHR20982">
    <property type="entry name" value="RIBOSOME RECYCLING FACTOR"/>
    <property type="match status" value="1"/>
</dbReference>
<dbReference type="Pfam" id="PF01765">
    <property type="entry name" value="RRF"/>
    <property type="match status" value="1"/>
</dbReference>
<dbReference type="SUPFAM" id="SSF55194">
    <property type="entry name" value="Ribosome recycling factor, RRF"/>
    <property type="match status" value="1"/>
</dbReference>
<feature type="transit peptide" description="Chloroplast" evidence="1">
    <location>
        <begin position="1"/>
        <end position="74"/>
    </location>
</feature>
<feature type="chain" id="PRO_0000302885" description="Ribosome-recycling factor, chloroplastic">
    <location>
        <begin position="75"/>
        <end position="266"/>
    </location>
</feature>
<feature type="region of interest" description="Disordered" evidence="3">
    <location>
        <begin position="1"/>
        <end position="30"/>
    </location>
</feature>
<feature type="coiled-coil region" evidence="2">
    <location>
        <begin position="75"/>
        <end position="109"/>
    </location>
</feature>
<feature type="coiled-coil region" evidence="2">
    <location>
        <begin position="207"/>
        <end position="266"/>
    </location>
</feature>
<feature type="compositionally biased region" description="Low complexity" evidence="3">
    <location>
        <begin position="1"/>
        <end position="26"/>
    </location>
</feature>
<feature type="sequence conflict" description="In Ref. 2; AA sequence." evidence="4" ref="2">
    <original>E</original>
    <variation>S</variation>
    <location>
        <position position="82"/>
    </location>
</feature>
<proteinExistence type="evidence at protein level"/>
<name>RRFC_ORYSI</name>
<accession>A2YMU2</accession>
<accession>B8B7J4</accession>
<accession>P83648</accession>
<accession>Q6YTV7</accession>
<reference key="1">
    <citation type="journal article" date="2005" name="PLoS Biol.">
        <title>The genomes of Oryza sativa: a history of duplications.</title>
        <authorList>
            <person name="Yu J."/>
            <person name="Wang J."/>
            <person name="Lin W."/>
            <person name="Li S."/>
            <person name="Li H."/>
            <person name="Zhou J."/>
            <person name="Ni P."/>
            <person name="Dong W."/>
            <person name="Hu S."/>
            <person name="Zeng C."/>
            <person name="Zhang J."/>
            <person name="Zhang Y."/>
            <person name="Li R."/>
            <person name="Xu Z."/>
            <person name="Li S."/>
            <person name="Li X."/>
            <person name="Zheng H."/>
            <person name="Cong L."/>
            <person name="Lin L."/>
            <person name="Yin J."/>
            <person name="Geng J."/>
            <person name="Li G."/>
            <person name="Shi J."/>
            <person name="Liu J."/>
            <person name="Lv H."/>
            <person name="Li J."/>
            <person name="Wang J."/>
            <person name="Deng Y."/>
            <person name="Ran L."/>
            <person name="Shi X."/>
            <person name="Wang X."/>
            <person name="Wu Q."/>
            <person name="Li C."/>
            <person name="Ren X."/>
            <person name="Wang J."/>
            <person name="Wang X."/>
            <person name="Li D."/>
            <person name="Liu D."/>
            <person name="Zhang X."/>
            <person name="Ji Z."/>
            <person name="Zhao W."/>
            <person name="Sun Y."/>
            <person name="Zhang Z."/>
            <person name="Bao J."/>
            <person name="Han Y."/>
            <person name="Dong L."/>
            <person name="Ji J."/>
            <person name="Chen P."/>
            <person name="Wu S."/>
            <person name="Liu J."/>
            <person name="Xiao Y."/>
            <person name="Bu D."/>
            <person name="Tan J."/>
            <person name="Yang L."/>
            <person name="Ye C."/>
            <person name="Zhang J."/>
            <person name="Xu J."/>
            <person name="Zhou Y."/>
            <person name="Yu Y."/>
            <person name="Zhang B."/>
            <person name="Zhuang S."/>
            <person name="Wei H."/>
            <person name="Liu B."/>
            <person name="Lei M."/>
            <person name="Yu H."/>
            <person name="Li Y."/>
            <person name="Xu H."/>
            <person name="Wei S."/>
            <person name="He X."/>
            <person name="Fang L."/>
            <person name="Zhang Z."/>
            <person name="Zhang Y."/>
            <person name="Huang X."/>
            <person name="Su Z."/>
            <person name="Tong W."/>
            <person name="Li J."/>
            <person name="Tong Z."/>
            <person name="Li S."/>
            <person name="Ye J."/>
            <person name="Wang L."/>
            <person name="Fang L."/>
            <person name="Lei T."/>
            <person name="Chen C.-S."/>
            <person name="Chen H.-C."/>
            <person name="Xu Z."/>
            <person name="Li H."/>
            <person name="Huang H."/>
            <person name="Zhang F."/>
            <person name="Xu H."/>
            <person name="Li N."/>
            <person name="Zhao C."/>
            <person name="Li S."/>
            <person name="Dong L."/>
            <person name="Huang Y."/>
            <person name="Li L."/>
            <person name="Xi Y."/>
            <person name="Qi Q."/>
            <person name="Li W."/>
            <person name="Zhang B."/>
            <person name="Hu W."/>
            <person name="Zhang Y."/>
            <person name="Tian X."/>
            <person name="Jiao Y."/>
            <person name="Liang X."/>
            <person name="Jin J."/>
            <person name="Gao L."/>
            <person name="Zheng W."/>
            <person name="Hao B."/>
            <person name="Liu S.-M."/>
            <person name="Wang W."/>
            <person name="Yuan L."/>
            <person name="Cao M."/>
            <person name="McDermott J."/>
            <person name="Samudrala R."/>
            <person name="Wang J."/>
            <person name="Wong G.K.-S."/>
            <person name="Yang H."/>
        </authorList>
    </citation>
    <scope>NUCLEOTIDE SEQUENCE [LARGE SCALE GENOMIC DNA]</scope>
    <source>
        <strain>cv. 93-11</strain>
    </source>
</reference>
<reference key="2">
    <citation type="submission" date="2003-07" db="UniProtKB">
        <title>Proteome analysis of rice leaf.</title>
        <authorList>
            <person name="Salekdeh G.H."/>
            <person name="Bennett J."/>
        </authorList>
    </citation>
    <scope>PROTEIN SEQUENCE OF 77-82 AND 164-171</scope>
    <source>
        <strain>cv. IR64</strain>
        <tissue>Leaf</tissue>
    </source>
</reference>
<evidence type="ECO:0000250" key="1"/>
<evidence type="ECO:0000255" key="2"/>
<evidence type="ECO:0000256" key="3">
    <source>
        <dbReference type="SAM" id="MobiDB-lite"/>
    </source>
</evidence>
<evidence type="ECO:0000305" key="4"/>
<protein>
    <recommendedName>
        <fullName>Ribosome-recycling factor, chloroplastic</fullName>
        <shortName>RRF</shortName>
    </recommendedName>
    <alternativeName>
        <fullName>Protein OsL8</fullName>
    </alternativeName>
    <alternativeName>
        <fullName>Ribosome-releasing factor, chloroplastic</fullName>
    </alternativeName>
</protein>
<sequence length="266" mass="29652">MPPLHAVSPAAAAAPPRALSSAARVPQRPGCVPERPNILSSSTNFMSLRAGPMRFYSRPLILQNSDKRAVLRHATIEEIEAEKSVIEDQARERMEKAIETVQNNFNTVRTGRANPAMLDRIEVEYYGTPVNLKSIAQINTPDATSLLIQPYDKSSLKLIEKTIVAANLGVTPSNDGEVIRVTVPPLTSDRRKELAKTVAKLAEEGKVAIRNIRRDAIKAYDKLEKEKKLSEDNVKDLSADLQKVTDEYMKKIEAIQKQKEQELMKI</sequence>
<organism>
    <name type="scientific">Oryza sativa subsp. indica</name>
    <name type="common">Rice</name>
    <dbReference type="NCBI Taxonomy" id="39946"/>
    <lineage>
        <taxon>Eukaryota</taxon>
        <taxon>Viridiplantae</taxon>
        <taxon>Streptophyta</taxon>
        <taxon>Embryophyta</taxon>
        <taxon>Tracheophyta</taxon>
        <taxon>Spermatophyta</taxon>
        <taxon>Magnoliopsida</taxon>
        <taxon>Liliopsida</taxon>
        <taxon>Poales</taxon>
        <taxon>Poaceae</taxon>
        <taxon>BOP clade</taxon>
        <taxon>Oryzoideae</taxon>
        <taxon>Oryzeae</taxon>
        <taxon>Oryzinae</taxon>
        <taxon>Oryza</taxon>
        <taxon>Oryza sativa</taxon>
    </lineage>
</organism>
<comment type="function">
    <text evidence="1">Responsible for the release of ribosomes from messenger RNA at the termination of chloroplastic protein biosynthesis.</text>
</comment>
<comment type="subcellular location">
    <subcellularLocation>
        <location>Plastid</location>
        <location>Chloroplast</location>
    </subcellularLocation>
</comment>
<comment type="similarity">
    <text evidence="4">Belongs to the RRF family.</text>
</comment>